<gene>
    <name type="primary">AMPD1</name>
</gene>
<dbReference type="EC" id="3.5.4.6" evidence="2"/>
<dbReference type="STRING" id="9986.ENSOCUP00000018188"/>
<dbReference type="BindingDB" id="P81072"/>
<dbReference type="ChEMBL" id="CHEMBL2242733"/>
<dbReference type="PaxDb" id="9986-ENSOCUP00000014118"/>
<dbReference type="eggNOG" id="KOG1096">
    <property type="taxonomic scope" value="Eukaryota"/>
</dbReference>
<dbReference type="InParanoid" id="P81072"/>
<dbReference type="BRENDA" id="3.5.4.6">
    <property type="organism ID" value="1749"/>
</dbReference>
<dbReference type="UniPathway" id="UPA00591">
    <property type="reaction ID" value="UER00663"/>
</dbReference>
<dbReference type="Proteomes" id="UP000001811">
    <property type="component" value="Unplaced"/>
</dbReference>
<dbReference type="GO" id="GO:0003876">
    <property type="term" value="F:AMP deaminase activity"/>
    <property type="evidence" value="ECO:0000250"/>
    <property type="project" value="UniProtKB"/>
</dbReference>
<dbReference type="GO" id="GO:0046872">
    <property type="term" value="F:metal ion binding"/>
    <property type="evidence" value="ECO:0007669"/>
    <property type="project" value="UniProtKB-KW"/>
</dbReference>
<dbReference type="GO" id="GO:0032264">
    <property type="term" value="P:IMP salvage"/>
    <property type="evidence" value="ECO:0007669"/>
    <property type="project" value="UniProtKB-UniPathway"/>
</dbReference>
<dbReference type="Gene3D" id="4.10.800.20">
    <property type="match status" value="1"/>
</dbReference>
<dbReference type="InterPro" id="IPR006329">
    <property type="entry name" value="AMPD"/>
</dbReference>
<dbReference type="Pfam" id="PF19326">
    <property type="entry name" value="AMP_deaminase"/>
    <property type="match status" value="1"/>
</dbReference>
<sequence length="26" mass="3169">MNQKHLLRFIKKSYQVDADRVVYSTK</sequence>
<comment type="function">
    <text evidence="4">AMP deaminase plays a critical role in energy metabolism.</text>
</comment>
<comment type="catalytic activity">
    <reaction evidence="2">
        <text>AMP + H2O + H(+) = IMP + NH4(+)</text>
        <dbReference type="Rhea" id="RHEA:14777"/>
        <dbReference type="ChEBI" id="CHEBI:15377"/>
        <dbReference type="ChEBI" id="CHEBI:15378"/>
        <dbReference type="ChEBI" id="CHEBI:28938"/>
        <dbReference type="ChEBI" id="CHEBI:58053"/>
        <dbReference type="ChEBI" id="CHEBI:456215"/>
        <dbReference type="EC" id="3.5.4.6"/>
    </reaction>
    <physiologicalReaction direction="left-to-right" evidence="4">
        <dbReference type="Rhea" id="RHEA:14778"/>
    </physiologicalReaction>
</comment>
<comment type="cofactor">
    <cofactor evidence="1">
        <name>Zn(2+)</name>
        <dbReference type="ChEBI" id="CHEBI:29105"/>
    </cofactor>
    <text evidence="1">Binds 1 zinc ion per subunit.</text>
</comment>
<comment type="pathway">
    <text evidence="4">Purine metabolism; IMP biosynthesis via salvage pathway; IMP from AMP: step 1/1.</text>
</comment>
<comment type="subunit">
    <text>Homotetramer.</text>
</comment>
<comment type="similarity">
    <text evidence="3">Belongs to the metallo-dependent hydrolases superfamily. Adenosine and AMP deaminases family.</text>
</comment>
<feature type="chain" id="PRO_0000194404" description="AMP deaminase 1">
    <location>
        <begin position="1" status="less than"/>
        <end position="26" status="greater than"/>
    </location>
</feature>
<feature type="non-terminal residue">
    <location>
        <position position="1"/>
    </location>
</feature>
<feature type="non-terminal residue">
    <location>
        <position position="26"/>
    </location>
</feature>
<evidence type="ECO:0000250" key="1"/>
<evidence type="ECO:0000269" key="2">
    <source>
    </source>
</evidence>
<evidence type="ECO:0000305" key="3"/>
<evidence type="ECO:0000305" key="4">
    <source>
    </source>
</evidence>
<organism>
    <name type="scientific">Oryctolagus cuniculus</name>
    <name type="common">Rabbit</name>
    <dbReference type="NCBI Taxonomy" id="9986"/>
    <lineage>
        <taxon>Eukaryota</taxon>
        <taxon>Metazoa</taxon>
        <taxon>Chordata</taxon>
        <taxon>Craniata</taxon>
        <taxon>Vertebrata</taxon>
        <taxon>Euteleostomi</taxon>
        <taxon>Mammalia</taxon>
        <taxon>Eutheria</taxon>
        <taxon>Euarchontoglires</taxon>
        <taxon>Glires</taxon>
        <taxon>Lagomorpha</taxon>
        <taxon>Leporidae</taxon>
        <taxon>Oryctolagus</taxon>
    </lineage>
</organism>
<name>AMPD1_RABIT</name>
<accession>P81072</accession>
<protein>
    <recommendedName>
        <fullName evidence="4">AMP deaminase 1</fullName>
        <ecNumber evidence="2">3.5.4.6</ecNumber>
    </recommendedName>
    <alternativeName>
        <fullName>AMP deaminase isoform M</fullName>
    </alternativeName>
    <alternativeName>
        <fullName>Myoadenylate deaminase</fullName>
    </alternativeName>
</protein>
<proteinExistence type="evidence at protein level"/>
<reference key="1">
    <citation type="journal article" date="1997" name="Comp. Biochem. Physiol.">
        <title>AMP-deaminases from chicken and rabbit muscle: partial primary sequences of homologous 17-kDa CNBr fragments: autorecognition by rabbit anti-[chicken AMPD].</title>
        <authorList>
            <person name="Chilson O.P."/>
            <person name="Kelly-Chilson A.E."/>
            <person name="Siegel N.R."/>
        </authorList>
    </citation>
    <scope>PROTEIN SEQUENCE</scope>
    <scope>FUNCTION</scope>
    <scope>CATALYTIC ACTIVITY</scope>
    <scope>PATHWAY</scope>
</reference>
<keyword id="KW-0903">Direct protein sequencing</keyword>
<keyword id="KW-0378">Hydrolase</keyword>
<keyword id="KW-0479">Metal-binding</keyword>
<keyword id="KW-0546">Nucleotide metabolism</keyword>
<keyword id="KW-1185">Reference proteome</keyword>
<keyword id="KW-0862">Zinc</keyword>